<dbReference type="EMBL" id="JMHX01319529">
    <property type="status" value="NOT_ANNOTATED_CDS"/>
    <property type="molecule type" value="Genomic_DNA"/>
</dbReference>
<dbReference type="SMR" id="P0DP86"/>
<dbReference type="GO" id="GO:0034366">
    <property type="term" value="C:spherical high-density lipoprotein particle"/>
    <property type="evidence" value="ECO:0007669"/>
    <property type="project" value="TreeGrafter"/>
</dbReference>
<dbReference type="GO" id="GO:0120020">
    <property type="term" value="F:cholesterol transfer activity"/>
    <property type="evidence" value="ECO:0007669"/>
    <property type="project" value="TreeGrafter"/>
</dbReference>
<dbReference type="GO" id="GO:0008035">
    <property type="term" value="F:high-density lipoprotein particle binding"/>
    <property type="evidence" value="ECO:0007669"/>
    <property type="project" value="TreeGrafter"/>
</dbReference>
<dbReference type="GO" id="GO:0008289">
    <property type="term" value="F:lipid binding"/>
    <property type="evidence" value="ECO:0007669"/>
    <property type="project" value="InterPro"/>
</dbReference>
<dbReference type="GO" id="GO:0042632">
    <property type="term" value="P:cholesterol homeostasis"/>
    <property type="evidence" value="ECO:0007669"/>
    <property type="project" value="TreeGrafter"/>
</dbReference>
<dbReference type="GO" id="GO:0030301">
    <property type="term" value="P:cholesterol transport"/>
    <property type="evidence" value="ECO:0007669"/>
    <property type="project" value="TreeGrafter"/>
</dbReference>
<dbReference type="GO" id="GO:0042157">
    <property type="term" value="P:lipoprotein metabolic process"/>
    <property type="evidence" value="ECO:0007669"/>
    <property type="project" value="InterPro"/>
</dbReference>
<dbReference type="GO" id="GO:0050766">
    <property type="term" value="P:positive regulation of phagocytosis"/>
    <property type="evidence" value="ECO:0000250"/>
    <property type="project" value="UniProtKB"/>
</dbReference>
<dbReference type="GO" id="GO:0050821">
    <property type="term" value="P:protein stabilization"/>
    <property type="evidence" value="ECO:0000250"/>
    <property type="project" value="UniProtKB"/>
</dbReference>
<dbReference type="Gene3D" id="6.10.250.100">
    <property type="match status" value="1"/>
</dbReference>
<dbReference type="InterPro" id="IPR006801">
    <property type="entry name" value="ApoA-II"/>
</dbReference>
<dbReference type="InterPro" id="IPR036172">
    <property type="entry name" value="ApoA-II_sf"/>
</dbReference>
<dbReference type="PANTHER" id="PTHR11027">
    <property type="entry name" value="APOLIPOPROTEIN A-II"/>
    <property type="match status" value="1"/>
</dbReference>
<dbReference type="PANTHER" id="PTHR11027:SF0">
    <property type="entry name" value="APOLIPOPROTEIN A-II"/>
    <property type="match status" value="1"/>
</dbReference>
<dbReference type="Pfam" id="PF04711">
    <property type="entry name" value="ApoA-II"/>
    <property type="match status" value="1"/>
</dbReference>
<dbReference type="SUPFAM" id="SSF82936">
    <property type="entry name" value="Apolipoprotein A-II"/>
    <property type="match status" value="1"/>
</dbReference>
<comment type="function">
    <text evidence="2">May stabilize HDL (high density lipoprotein) structure by its association with lipids, and affect the HDL metabolism.</text>
</comment>
<comment type="subunit">
    <text evidence="1">Monomer. Interacts with NAXE and NDRG1.</text>
</comment>
<comment type="subcellular location">
    <subcellularLocation>
        <location evidence="1">Secreted</location>
    </subcellularLocation>
</comment>
<comment type="similarity">
    <text evidence="4">Belongs to the apolipoprotein A2 family.</text>
</comment>
<sequence>MKLLAATVLLLTICSLEGALVRRQAEEPSVESLVSQYFQTVTDYGKDLMEKVKSPELQAQAKAYFEKSKEQLTPLVKKAGTDLVNFLSYFVELRTQPATQ</sequence>
<reference key="1">
    <citation type="submission" date="2014-10" db="EMBL/GenBank/DDBJ databases">
        <authorList>
            <person name="Abdullah M.T."/>
            <person name="Mat Daud M.H.R."/>
            <person name="Nur Aida M.T."/>
            <person name="Idris A."/>
            <person name="Croft L."/>
            <person name="Saidin A."/>
            <person name="Alias H."/>
            <person name="Zaidan Z."/>
            <person name="Buang Z."/>
            <person name="Zainuddin R."/>
            <person name="Esa Y."/>
            <person name="Hercus R."/>
        </authorList>
    </citation>
    <scope>NUCLEOTIDE SEQUENCE [LARGE SCALE GENOMIC DNA]</scope>
</reference>
<reference key="2">
    <citation type="unpublished observations" date="2017-06">
        <authorList>
            <person name="Puppione D.L."/>
        </authorList>
    </citation>
    <scope>IDENTIFICATION</scope>
</reference>
<proteinExistence type="inferred from homology"/>
<name>APOA2_NASLA</name>
<keyword id="KW-0165">Cleavage on pair of basic residues</keyword>
<keyword id="KW-0345">HDL</keyword>
<keyword id="KW-0445">Lipid transport</keyword>
<keyword id="KW-0558">Oxidation</keyword>
<keyword id="KW-0597">Phosphoprotein</keyword>
<keyword id="KW-0964">Secreted</keyword>
<keyword id="KW-0732">Signal</keyword>
<keyword id="KW-0813">Transport</keyword>
<gene>
    <name type="primary">APOA2</name>
</gene>
<feature type="signal peptide" evidence="3">
    <location>
        <begin position="1"/>
        <end position="18"/>
    </location>
</feature>
<feature type="chain" id="PRO_0000441388" description="Proapolipoprotein A-II" evidence="2">
    <location>
        <begin position="19"/>
        <end position="100"/>
    </location>
</feature>
<feature type="chain" id="PRO_0000441389" description="Apolipoprotein A-II" evidence="1">
    <location>
        <begin position="24"/>
        <end position="100"/>
    </location>
</feature>
<feature type="chain" id="PRO_0000441390" description="Truncated apolipoprotein A-II" evidence="1">
    <location>
        <begin position="24"/>
        <end position="99"/>
    </location>
</feature>
<feature type="modified residue" description="Methionine sulfoxide" evidence="1">
    <location>
        <position position="49"/>
    </location>
</feature>
<feature type="modified residue" description="Phosphoserine" evidence="1">
    <location>
        <position position="54"/>
    </location>
</feature>
<feature type="modified residue" description="Phosphoserine" evidence="1">
    <location>
        <position position="68"/>
    </location>
</feature>
<accession>P0DP86</accession>
<organism>
    <name type="scientific">Nasalis larvatus</name>
    <name type="common">Proboscis monkey</name>
    <dbReference type="NCBI Taxonomy" id="43780"/>
    <lineage>
        <taxon>Eukaryota</taxon>
        <taxon>Metazoa</taxon>
        <taxon>Chordata</taxon>
        <taxon>Craniata</taxon>
        <taxon>Vertebrata</taxon>
        <taxon>Euteleostomi</taxon>
        <taxon>Mammalia</taxon>
        <taxon>Eutheria</taxon>
        <taxon>Euarchontoglires</taxon>
        <taxon>Primates</taxon>
        <taxon>Haplorrhini</taxon>
        <taxon>Catarrhini</taxon>
        <taxon>Cercopithecidae</taxon>
        <taxon>Colobinae</taxon>
        <taxon>Nasalis</taxon>
    </lineage>
</organism>
<protein>
    <recommendedName>
        <fullName>Apolipoprotein A-II</fullName>
        <shortName>Apo-AII</shortName>
        <shortName>ApoA-II</shortName>
    </recommendedName>
    <alternativeName>
        <fullName>Apolipoprotein A2</fullName>
    </alternativeName>
    <component>
        <recommendedName>
            <fullName>Proapolipoprotein A-II</fullName>
            <shortName>ProapoA-II</shortName>
        </recommendedName>
    </component>
    <component>
        <recommendedName>
            <fullName>Truncated apolipoprotein A-II</fullName>
        </recommendedName>
    </component>
</protein>
<evidence type="ECO:0000250" key="1">
    <source>
        <dbReference type="UniProtKB" id="P02652"/>
    </source>
</evidence>
<evidence type="ECO:0000250" key="2">
    <source>
        <dbReference type="UniProtKB" id="P18656"/>
    </source>
</evidence>
<evidence type="ECO:0000255" key="3"/>
<evidence type="ECO:0000305" key="4"/>